<accession>B7N6T9</accession>
<protein>
    <recommendedName>
        <fullName evidence="1">Anaerobic nitric oxide reductase transcription regulator NorR</fullName>
    </recommendedName>
</protein>
<name>NORR_ECOLU</name>
<feature type="chain" id="PRO_1000141191" description="Anaerobic nitric oxide reductase transcription regulator NorR">
    <location>
        <begin position="1"/>
        <end position="504"/>
    </location>
</feature>
<feature type="domain" description="Sigma-54 factor interaction" evidence="1">
    <location>
        <begin position="187"/>
        <end position="416"/>
    </location>
</feature>
<feature type="DNA-binding region" description="H-T-H motif" evidence="1">
    <location>
        <begin position="479"/>
        <end position="498"/>
    </location>
</feature>
<feature type="binding site" evidence="1">
    <location>
        <begin position="215"/>
        <end position="222"/>
    </location>
    <ligand>
        <name>ATP</name>
        <dbReference type="ChEBI" id="CHEBI:30616"/>
    </ligand>
</feature>
<feature type="binding site" evidence="1">
    <location>
        <begin position="278"/>
        <end position="287"/>
    </location>
    <ligand>
        <name>ATP</name>
        <dbReference type="ChEBI" id="CHEBI:30616"/>
    </ligand>
</feature>
<feature type="modified residue" description="4-aspartylphosphate" evidence="1">
    <location>
        <position position="57"/>
    </location>
</feature>
<sequence>MSFSVDVLANIAIELQRGIGHQDRFQRLITTLRQVLECDASALLRYDSRQFIPLAIDGLAKDVLGRRFALEGHPRLEAIARAGDVVRFPADSELPDPYDGLIPGQESLKVHACVGLPLFAGQNLIGALTLDGMQPDQFDVFSDEELRLIAALAAGALSNALLIEQLESQNMLPGDAAPFEAVKQTQMIGLSPGMTQLKKEIEIVAASDLNVLISGETGTGKELVAKAIHEASPRAVNPLVYLNCAALPESVAESELFGHVKGAFTGAISNRSGKFEMADNGTLFLDEIGELSLALQAKLLRVLQYGDIQRVGDDRSLRVDVRVLAATNRDLREEVLAGRFRADLFHRLSVFPLSVPPLRERGDDVILLAGYFCEQCRLRLGLSRVVLSAGARNLLQHYNFPGNVRELEHAIHRAVVLARATRSGDEVILEAQHFAFPDVTLPPPEAAAVPVVKQNLREATEAFQRETIRQALAQNHHNWAACARMLETDVANLHRLAKRLGLKD</sequence>
<evidence type="ECO:0000255" key="1">
    <source>
        <dbReference type="HAMAP-Rule" id="MF_01314"/>
    </source>
</evidence>
<organism>
    <name type="scientific">Escherichia coli O17:K52:H18 (strain UMN026 / ExPEC)</name>
    <dbReference type="NCBI Taxonomy" id="585056"/>
    <lineage>
        <taxon>Bacteria</taxon>
        <taxon>Pseudomonadati</taxon>
        <taxon>Pseudomonadota</taxon>
        <taxon>Gammaproteobacteria</taxon>
        <taxon>Enterobacterales</taxon>
        <taxon>Enterobacteriaceae</taxon>
        <taxon>Escherichia</taxon>
    </lineage>
</organism>
<comment type="function">
    <text evidence="1">Required for the expression of anaerobic nitric oxide (NO) reductase, acts as a transcriptional activator for at least the norVW operon. Activation also requires sigma-54.</text>
</comment>
<comment type="pathway">
    <text evidence="1">Nitrogen metabolism; nitric oxide reduction.</text>
</comment>
<reference key="1">
    <citation type="journal article" date="2009" name="PLoS Genet.">
        <title>Organised genome dynamics in the Escherichia coli species results in highly diverse adaptive paths.</title>
        <authorList>
            <person name="Touchon M."/>
            <person name="Hoede C."/>
            <person name="Tenaillon O."/>
            <person name="Barbe V."/>
            <person name="Baeriswyl S."/>
            <person name="Bidet P."/>
            <person name="Bingen E."/>
            <person name="Bonacorsi S."/>
            <person name="Bouchier C."/>
            <person name="Bouvet O."/>
            <person name="Calteau A."/>
            <person name="Chiapello H."/>
            <person name="Clermont O."/>
            <person name="Cruveiller S."/>
            <person name="Danchin A."/>
            <person name="Diard M."/>
            <person name="Dossat C."/>
            <person name="Karoui M.E."/>
            <person name="Frapy E."/>
            <person name="Garry L."/>
            <person name="Ghigo J.M."/>
            <person name="Gilles A.M."/>
            <person name="Johnson J."/>
            <person name="Le Bouguenec C."/>
            <person name="Lescat M."/>
            <person name="Mangenot S."/>
            <person name="Martinez-Jehanne V."/>
            <person name="Matic I."/>
            <person name="Nassif X."/>
            <person name="Oztas S."/>
            <person name="Petit M.A."/>
            <person name="Pichon C."/>
            <person name="Rouy Z."/>
            <person name="Ruf C.S."/>
            <person name="Schneider D."/>
            <person name="Tourret J."/>
            <person name="Vacherie B."/>
            <person name="Vallenet D."/>
            <person name="Medigue C."/>
            <person name="Rocha E.P.C."/>
            <person name="Denamur E."/>
        </authorList>
    </citation>
    <scope>NUCLEOTIDE SEQUENCE [LARGE SCALE GENOMIC DNA]</scope>
    <source>
        <strain>UMN026 / ExPEC</strain>
    </source>
</reference>
<gene>
    <name evidence="1" type="primary">norR</name>
    <name type="ordered locus">ECUMN_3030</name>
</gene>
<dbReference type="EMBL" id="CU928163">
    <property type="protein sequence ID" value="CAR14200.1"/>
    <property type="molecule type" value="Genomic_DNA"/>
</dbReference>
<dbReference type="RefSeq" id="WP_000010723.1">
    <property type="nucleotide sequence ID" value="NC_011751.1"/>
</dbReference>
<dbReference type="RefSeq" id="YP_002413722.1">
    <property type="nucleotide sequence ID" value="NC_011751.1"/>
</dbReference>
<dbReference type="SMR" id="B7N6T9"/>
<dbReference type="STRING" id="585056.ECUMN_3030"/>
<dbReference type="KEGG" id="eum:ECUMN_3030"/>
<dbReference type="PATRIC" id="fig|585056.7.peg.3207"/>
<dbReference type="HOGENOM" id="CLU_000445_125_0_6"/>
<dbReference type="UniPathway" id="UPA00638"/>
<dbReference type="Proteomes" id="UP000007097">
    <property type="component" value="Chromosome"/>
</dbReference>
<dbReference type="GO" id="GO:0005524">
    <property type="term" value="F:ATP binding"/>
    <property type="evidence" value="ECO:0007669"/>
    <property type="project" value="UniProtKB-UniRule"/>
</dbReference>
<dbReference type="GO" id="GO:0016887">
    <property type="term" value="F:ATP hydrolysis activity"/>
    <property type="evidence" value="ECO:0007669"/>
    <property type="project" value="InterPro"/>
</dbReference>
<dbReference type="GO" id="GO:0003677">
    <property type="term" value="F:DNA binding"/>
    <property type="evidence" value="ECO:0007669"/>
    <property type="project" value="UniProtKB-KW"/>
</dbReference>
<dbReference type="GO" id="GO:0003700">
    <property type="term" value="F:DNA-binding transcription factor activity"/>
    <property type="evidence" value="ECO:0007669"/>
    <property type="project" value="UniProtKB-UniRule"/>
</dbReference>
<dbReference type="GO" id="GO:0000160">
    <property type="term" value="P:phosphorelay signal transduction system"/>
    <property type="evidence" value="ECO:0007669"/>
    <property type="project" value="UniProtKB-UniRule"/>
</dbReference>
<dbReference type="CDD" id="cd00009">
    <property type="entry name" value="AAA"/>
    <property type="match status" value="1"/>
</dbReference>
<dbReference type="FunFam" id="1.10.10.60:FF:000188">
    <property type="entry name" value="Anaerobic nitric oxide reductase transcription regulator NorR"/>
    <property type="match status" value="1"/>
</dbReference>
<dbReference type="FunFam" id="1.10.8.60:FF:000045">
    <property type="entry name" value="Anaerobic nitric oxide reductase transcription regulator NorR"/>
    <property type="match status" value="1"/>
</dbReference>
<dbReference type="FunFam" id="3.30.450.40:FF:000021">
    <property type="entry name" value="Anaerobic nitric oxide reductase transcription regulator NorR"/>
    <property type="match status" value="1"/>
</dbReference>
<dbReference type="FunFam" id="3.40.50.300:FF:000006">
    <property type="entry name" value="DNA-binding transcriptional regulator NtrC"/>
    <property type="match status" value="1"/>
</dbReference>
<dbReference type="Gene3D" id="1.10.8.60">
    <property type="match status" value="1"/>
</dbReference>
<dbReference type="Gene3D" id="3.30.450.40">
    <property type="match status" value="1"/>
</dbReference>
<dbReference type="Gene3D" id="1.10.10.60">
    <property type="entry name" value="Homeodomain-like"/>
    <property type="match status" value="1"/>
</dbReference>
<dbReference type="Gene3D" id="3.40.50.300">
    <property type="entry name" value="P-loop containing nucleotide triphosphate hydrolases"/>
    <property type="match status" value="1"/>
</dbReference>
<dbReference type="HAMAP" id="MF_01314">
    <property type="entry name" value="NorR"/>
    <property type="match status" value="1"/>
</dbReference>
<dbReference type="InterPro" id="IPR003593">
    <property type="entry name" value="AAA+_ATPase"/>
</dbReference>
<dbReference type="InterPro" id="IPR003018">
    <property type="entry name" value="GAF"/>
</dbReference>
<dbReference type="InterPro" id="IPR029016">
    <property type="entry name" value="GAF-like_dom_sf"/>
</dbReference>
<dbReference type="InterPro" id="IPR009057">
    <property type="entry name" value="Homeodomain-like_sf"/>
</dbReference>
<dbReference type="InterPro" id="IPR023944">
    <property type="entry name" value="NorR"/>
</dbReference>
<dbReference type="InterPro" id="IPR027417">
    <property type="entry name" value="P-loop_NTPase"/>
</dbReference>
<dbReference type="InterPro" id="IPR002078">
    <property type="entry name" value="Sigma_54_int"/>
</dbReference>
<dbReference type="InterPro" id="IPR025662">
    <property type="entry name" value="Sigma_54_int_dom_ATP-bd_1"/>
</dbReference>
<dbReference type="InterPro" id="IPR025943">
    <property type="entry name" value="Sigma_54_int_dom_ATP-bd_2"/>
</dbReference>
<dbReference type="InterPro" id="IPR025944">
    <property type="entry name" value="Sigma_54_int_dom_CS"/>
</dbReference>
<dbReference type="NCBIfam" id="NF003451">
    <property type="entry name" value="PRK05022.1"/>
    <property type="match status" value="1"/>
</dbReference>
<dbReference type="PANTHER" id="PTHR32071:SF35">
    <property type="entry name" value="ANAEROBIC NITRIC OXIDE REDUCTASE TRANSCRIPTION REGULATOR NORR"/>
    <property type="match status" value="1"/>
</dbReference>
<dbReference type="PANTHER" id="PTHR32071">
    <property type="entry name" value="TRANSCRIPTIONAL REGULATORY PROTEIN"/>
    <property type="match status" value="1"/>
</dbReference>
<dbReference type="Pfam" id="PF01590">
    <property type="entry name" value="GAF"/>
    <property type="match status" value="1"/>
</dbReference>
<dbReference type="Pfam" id="PF00158">
    <property type="entry name" value="Sigma54_activat"/>
    <property type="match status" value="1"/>
</dbReference>
<dbReference type="SMART" id="SM00382">
    <property type="entry name" value="AAA"/>
    <property type="match status" value="1"/>
</dbReference>
<dbReference type="SMART" id="SM00065">
    <property type="entry name" value="GAF"/>
    <property type="match status" value="1"/>
</dbReference>
<dbReference type="SUPFAM" id="SSF55781">
    <property type="entry name" value="GAF domain-like"/>
    <property type="match status" value="1"/>
</dbReference>
<dbReference type="SUPFAM" id="SSF46689">
    <property type="entry name" value="Homeodomain-like"/>
    <property type="match status" value="1"/>
</dbReference>
<dbReference type="SUPFAM" id="SSF52540">
    <property type="entry name" value="P-loop containing nucleoside triphosphate hydrolases"/>
    <property type="match status" value="1"/>
</dbReference>
<dbReference type="PROSITE" id="PS00675">
    <property type="entry name" value="SIGMA54_INTERACT_1"/>
    <property type="match status" value="1"/>
</dbReference>
<dbReference type="PROSITE" id="PS00676">
    <property type="entry name" value="SIGMA54_INTERACT_2"/>
    <property type="match status" value="1"/>
</dbReference>
<dbReference type="PROSITE" id="PS00688">
    <property type="entry name" value="SIGMA54_INTERACT_3"/>
    <property type="match status" value="1"/>
</dbReference>
<dbReference type="PROSITE" id="PS50045">
    <property type="entry name" value="SIGMA54_INTERACT_4"/>
    <property type="match status" value="1"/>
</dbReference>
<proteinExistence type="inferred from homology"/>
<keyword id="KW-0067">ATP-binding</keyword>
<keyword id="KW-0238">DNA-binding</keyword>
<keyword id="KW-0547">Nucleotide-binding</keyword>
<keyword id="KW-0597">Phosphoprotein</keyword>
<keyword id="KW-0804">Transcription</keyword>
<keyword id="KW-0805">Transcription regulation</keyword>